<reference evidence="8" key="1">
    <citation type="journal article" date="2011" name="J. Bacteriol.">
        <title>Complete genome sequence of the hyperthermophilic, piezophilic, heterotrophic, and carboxydotrophic archaeon Thermococcus barophilus MP.</title>
        <authorList>
            <person name="Vannier P."/>
            <person name="Marteinsson V.T."/>
            <person name="Fridjonsson O.H."/>
            <person name="Oger P."/>
            <person name="Jebbar M."/>
        </authorList>
    </citation>
    <scope>NUCLEOTIDE SEQUENCE [LARGE SCALE GENOMIC DNA]</scope>
    <source>
        <strain>DSM 11836 / MP</strain>
    </source>
</reference>
<reference key="2">
    <citation type="journal article" date="2021" name="Biomolecules">
        <title>Phylogenetic Diversity of Lhr Proteins and Biochemical Activities of the Thermococcales aLhr2 DNA/RNA Helicase.</title>
        <authorList>
            <person name="Hajj M."/>
            <person name="Langendijk-Genevaux P."/>
            <person name="Batista M."/>
            <person name="Quentin Y."/>
            <person name="Laurent S."/>
            <person name="Capeyrou R."/>
            <person name="Abdel-Razzak Z."/>
            <person name="Flament D."/>
            <person name="Chamieh H."/>
            <person name="Fichant G."/>
            <person name="Clouet-d'Orval B."/>
            <person name="Bouvier M."/>
        </authorList>
    </citation>
    <scope>FUNCTION AS HELICASE</scope>
    <scope>FUNCTION AS AN ATPASE</scope>
    <scope>CATALYTIC ACTIVITY</scope>
    <scope>ACTIVITY REGULATION</scope>
    <scope>BIOPHYSICOCHEMICAL PROPERTIES</scope>
    <scope>SUBUNIT</scope>
    <scope>DOMAIN</scope>
    <scope>DNA-BINDING</scope>
    <scope>RNA-BINDING</scope>
    <scope>MUTAGENESIS OF THR-215; ILE-512 AND TRP-577</scope>
    <source>
        <strain>DSM 11836 / MP</strain>
    </source>
</reference>
<name>LHRC2_THEBM</name>
<dbReference type="EC" id="3.6.4.-" evidence="4"/>
<dbReference type="EC" id="5.6.2.-" evidence="4"/>
<dbReference type="EMBL" id="CP002372">
    <property type="protein sequence ID" value="ADT83510.1"/>
    <property type="molecule type" value="Genomic_DNA"/>
</dbReference>
<dbReference type="RefSeq" id="WP_013466808.1">
    <property type="nucleotide sequence ID" value="NC_014804.1"/>
</dbReference>
<dbReference type="GeneID" id="10040851"/>
<dbReference type="KEGG" id="tba:TERMP_00533"/>
<dbReference type="PATRIC" id="fig|391623.17.peg.534"/>
<dbReference type="eggNOG" id="arCOG00557">
    <property type="taxonomic scope" value="Archaea"/>
</dbReference>
<dbReference type="HOGENOM" id="CLU_002025_0_0_2"/>
<dbReference type="OrthoDB" id="372104at2157"/>
<dbReference type="Proteomes" id="UP000007478">
    <property type="component" value="Chromosome"/>
</dbReference>
<dbReference type="GO" id="GO:0005524">
    <property type="term" value="F:ATP binding"/>
    <property type="evidence" value="ECO:0007669"/>
    <property type="project" value="UniProtKB-KW"/>
</dbReference>
<dbReference type="GO" id="GO:0016887">
    <property type="term" value="F:ATP hydrolysis activity"/>
    <property type="evidence" value="ECO:0007669"/>
    <property type="project" value="TreeGrafter"/>
</dbReference>
<dbReference type="GO" id="GO:0140097">
    <property type="term" value="F:catalytic activity, acting on DNA"/>
    <property type="evidence" value="ECO:0007669"/>
    <property type="project" value="UniProtKB-ARBA"/>
</dbReference>
<dbReference type="GO" id="GO:0003677">
    <property type="term" value="F:DNA binding"/>
    <property type="evidence" value="ECO:0007669"/>
    <property type="project" value="TreeGrafter"/>
</dbReference>
<dbReference type="GO" id="GO:0004386">
    <property type="term" value="F:helicase activity"/>
    <property type="evidence" value="ECO:0007669"/>
    <property type="project" value="UniProtKB-KW"/>
</dbReference>
<dbReference type="CDD" id="cd17922">
    <property type="entry name" value="DEXHc_LHR-like"/>
    <property type="match status" value="1"/>
</dbReference>
<dbReference type="CDD" id="cd18796">
    <property type="entry name" value="SF2_C_LHR"/>
    <property type="match status" value="1"/>
</dbReference>
<dbReference type="Gene3D" id="3.40.50.300">
    <property type="entry name" value="P-loop containing nucleotide triphosphate hydrolases"/>
    <property type="match status" value="2"/>
</dbReference>
<dbReference type="InterPro" id="IPR052511">
    <property type="entry name" value="ATP-dep_Helicase"/>
</dbReference>
<dbReference type="InterPro" id="IPR013701">
    <property type="entry name" value="DEAD/DEAH_assoc"/>
</dbReference>
<dbReference type="InterPro" id="IPR011545">
    <property type="entry name" value="DEAD/DEAH_box_helicase_dom"/>
</dbReference>
<dbReference type="InterPro" id="IPR014001">
    <property type="entry name" value="Helicase_ATP-bd"/>
</dbReference>
<dbReference type="InterPro" id="IPR001650">
    <property type="entry name" value="Helicase_C-like"/>
</dbReference>
<dbReference type="InterPro" id="IPR017170">
    <property type="entry name" value="Lhr-like_ATP-dep_RNA_helic_prd"/>
</dbReference>
<dbReference type="InterPro" id="IPR045628">
    <property type="entry name" value="Lhr_WH_dom"/>
</dbReference>
<dbReference type="InterPro" id="IPR027417">
    <property type="entry name" value="P-loop_NTPase"/>
</dbReference>
<dbReference type="NCBIfam" id="NF010338">
    <property type="entry name" value="PRK13767.1"/>
    <property type="match status" value="1"/>
</dbReference>
<dbReference type="PANTHER" id="PTHR47962">
    <property type="entry name" value="ATP-DEPENDENT HELICASE LHR-RELATED-RELATED"/>
    <property type="match status" value="1"/>
</dbReference>
<dbReference type="PANTHER" id="PTHR47962:SF6">
    <property type="entry name" value="LARGE HELICASE-RELATED PROTEIN"/>
    <property type="match status" value="1"/>
</dbReference>
<dbReference type="Pfam" id="PF00270">
    <property type="entry name" value="DEAD"/>
    <property type="match status" value="1"/>
</dbReference>
<dbReference type="Pfam" id="PF08494">
    <property type="entry name" value="DEAD_assoc"/>
    <property type="match status" value="1"/>
</dbReference>
<dbReference type="Pfam" id="PF00271">
    <property type="entry name" value="Helicase_C"/>
    <property type="match status" value="1"/>
</dbReference>
<dbReference type="Pfam" id="PF19306">
    <property type="entry name" value="WH_Lhr"/>
    <property type="match status" value="1"/>
</dbReference>
<dbReference type="PIRSF" id="PIRSF037307">
    <property type="entry name" value="Lhr-like_helic_prd"/>
    <property type="match status" value="1"/>
</dbReference>
<dbReference type="SMART" id="SM00487">
    <property type="entry name" value="DEXDc"/>
    <property type="match status" value="1"/>
</dbReference>
<dbReference type="SMART" id="SM00490">
    <property type="entry name" value="HELICc"/>
    <property type="match status" value="1"/>
</dbReference>
<dbReference type="SUPFAM" id="SSF52540">
    <property type="entry name" value="P-loop containing nucleoside triphosphate hydrolases"/>
    <property type="match status" value="1"/>
</dbReference>
<dbReference type="PROSITE" id="PS51192">
    <property type="entry name" value="HELICASE_ATP_BIND_1"/>
    <property type="match status" value="1"/>
</dbReference>
<dbReference type="PROSITE" id="PS51194">
    <property type="entry name" value="HELICASE_CTER"/>
    <property type="match status" value="1"/>
</dbReference>
<proteinExistence type="evidence at protein level"/>
<keyword id="KW-0067">ATP-binding</keyword>
<keyword id="KW-0227">DNA damage</keyword>
<keyword id="KW-0234">DNA repair</keyword>
<keyword id="KW-0238">DNA-binding</keyword>
<keyword id="KW-0347">Helicase</keyword>
<keyword id="KW-0378">Hydrolase</keyword>
<keyword id="KW-0413">Isomerase</keyword>
<keyword id="KW-0547">Nucleotide-binding</keyword>
<keyword id="KW-0694">RNA-binding</keyword>
<feature type="chain" id="PRO_0000462455" description="ATP-dependent helicase Lhr-Core protein 2">
    <location>
        <begin position="1"/>
        <end position="863"/>
    </location>
</feature>
<feature type="domain" description="Helicase ATP-binding" evidence="2">
    <location>
        <begin position="41"/>
        <end position="234"/>
    </location>
</feature>
<feature type="domain" description="Helicase C-terminal" evidence="3">
    <location>
        <begin position="275"/>
        <end position="424"/>
    </location>
</feature>
<feature type="region of interest" description="WH domain" evidence="7">
    <location>
        <begin position="418"/>
        <end position="512"/>
    </location>
</feature>
<feature type="region of interest" description="Domain 4" evidence="7">
    <location>
        <begin position="513"/>
        <end position="863"/>
    </location>
</feature>
<feature type="short sequence motif" description="DEAH box" evidence="2">
    <location>
        <begin position="179"/>
        <end position="182"/>
    </location>
</feature>
<feature type="binding site" evidence="1">
    <location>
        <position position="30"/>
    </location>
    <ligand>
        <name>ATP</name>
        <dbReference type="ChEBI" id="CHEBI:30616"/>
    </ligand>
</feature>
<feature type="binding site" evidence="1">
    <location>
        <position position="37"/>
    </location>
    <ligand>
        <name>ATP</name>
        <dbReference type="ChEBI" id="CHEBI:30616"/>
    </ligand>
</feature>
<feature type="binding site" evidence="1">
    <location>
        <position position="60"/>
    </location>
    <ligand>
        <name>ATP</name>
        <dbReference type="ChEBI" id="CHEBI:30616"/>
    </ligand>
</feature>
<feature type="binding site" evidence="1">
    <location>
        <position position="61"/>
    </location>
    <ligand>
        <name>ATP</name>
        <dbReference type="ChEBI" id="CHEBI:30616"/>
    </ligand>
</feature>
<feature type="binding site" evidence="1">
    <location>
        <position position="179"/>
    </location>
    <ligand>
        <name>ATP</name>
        <dbReference type="ChEBI" id="CHEBI:30616"/>
    </ligand>
</feature>
<feature type="binding site" evidence="1">
    <location>
        <position position="180"/>
    </location>
    <ligand>
        <name>ATP</name>
        <dbReference type="ChEBI" id="CHEBI:30616"/>
    </ligand>
</feature>
<feature type="binding site" evidence="1">
    <location>
        <position position="377"/>
    </location>
    <ligand>
        <name>ATP</name>
        <dbReference type="ChEBI" id="CHEBI:30616"/>
    </ligand>
</feature>
<feature type="binding site" evidence="1">
    <location>
        <position position="380"/>
    </location>
    <ligand>
        <name>ATP</name>
        <dbReference type="ChEBI" id="CHEBI:30616"/>
    </ligand>
</feature>
<feature type="site" description="Wedges between bases of the loading strand" evidence="1">
    <location>
        <position position="512"/>
    </location>
</feature>
<feature type="mutagenesis site" description="Loss of ATPase activity." evidence="4">
    <original>T</original>
    <variation>A</variation>
    <location>
        <position position="215"/>
    </location>
</feature>
<feature type="mutagenesis site" description="No change in unwinding or annealing activities." evidence="4">
    <original>I</original>
    <variation>A</variation>
    <location>
        <position position="512"/>
    </location>
</feature>
<feature type="mutagenesis site" description="Loss of unwinding and annealing activities." evidence="4">
    <original>W</original>
    <variation>A</variation>
    <location>
        <position position="577"/>
    </location>
</feature>
<evidence type="ECO:0000250" key="1">
    <source>
        <dbReference type="UniProtKB" id="A0QT91"/>
    </source>
</evidence>
<evidence type="ECO:0000255" key="2">
    <source>
        <dbReference type="PROSITE-ProRule" id="PRU00541"/>
    </source>
</evidence>
<evidence type="ECO:0000255" key="3">
    <source>
        <dbReference type="PROSITE-ProRule" id="PRU00542"/>
    </source>
</evidence>
<evidence type="ECO:0000269" key="4">
    <source>
    </source>
</evidence>
<evidence type="ECO:0000303" key="5">
    <source>
    </source>
</evidence>
<evidence type="ECO:0000305" key="6"/>
<evidence type="ECO:0000305" key="7">
    <source>
    </source>
</evidence>
<evidence type="ECO:0000312" key="8">
    <source>
        <dbReference type="EMBL" id="ADT83510.1"/>
    </source>
</evidence>
<comment type="function">
    <text evidence="4">A DNA:RNA helicase with a significant strand annealing activity, probably involved in DNA repair and RNA transactions. In vitro has a slow helicase activity with a preference for 3'-overhang duplexes; displaces RNA from 3'-overhang DNA:RNA or RNA:RNA duplexes. 3'-tailed double-stranded (ds)DNA is not unwound. The slow helicase activity on RNA duplexes is ATP-independent. Has strand annealing properties in the absence of ATP; forms 3'-overhang DNA:RNA, 3'-overhang dsRNA and 3'-overhang dsDNA duplexes but not 5'-overhang duplexes. A nucleic acid-dependent ATPase; single-stranded (ss)DNA and RNA are equally stimulatory. Binds ssDNA, RNA, dsDNA and dsRNA duplexes.</text>
</comment>
<comment type="catalytic activity">
    <reaction evidence="7">
        <text>ATP + H2O = ADP + phosphate + H(+)</text>
        <dbReference type="Rhea" id="RHEA:13065"/>
        <dbReference type="ChEBI" id="CHEBI:15377"/>
        <dbReference type="ChEBI" id="CHEBI:15378"/>
        <dbReference type="ChEBI" id="CHEBI:30616"/>
        <dbReference type="ChEBI" id="CHEBI:43474"/>
        <dbReference type="ChEBI" id="CHEBI:456216"/>
    </reaction>
</comment>
<comment type="activity regulation">
    <text evidence="4">Unwinding of dsRNA duplexes is inhibited by AMP-PMP and ATP-gamma-S.</text>
</comment>
<comment type="biophysicochemical properties">
    <kinetics>
        <KM evidence="4">23 uM for ssDNA of 50 nucleotides</KM>
        <KM evidence="4">13 uM for ssRNA of 50 nucleotides</KM>
    </kinetics>
</comment>
<comment type="subunit">
    <text evidence="4">Monomer.</text>
</comment>
<comment type="domain">
    <text evidence="4">Composed of 2 helicase domains, a winged-helix (WH) domain and Lhr-specific domain 4. Deletion of domain 4 leads to decreased ATPase activity, slightly decreased DNA-binding and loss of DNA unwinding or annealing activites; the isolated domain binds ssDNA and RNA less well than intact protein.</text>
</comment>
<comment type="similarity">
    <text evidence="6">Belongs to the Lhr helicase family. Lhr-Core subfamily.</text>
</comment>
<organism>
    <name type="scientific">Thermococcus barophilus (strain DSM 11836 / MP)</name>
    <dbReference type="NCBI Taxonomy" id="391623"/>
    <lineage>
        <taxon>Archaea</taxon>
        <taxon>Methanobacteriati</taxon>
        <taxon>Methanobacteriota</taxon>
        <taxon>Thermococci</taxon>
        <taxon>Thermococcales</taxon>
        <taxon>Thermococcaceae</taxon>
        <taxon>Thermococcus</taxon>
    </lineage>
</organism>
<gene>
    <name evidence="5" type="primary">alhr2</name>
    <name evidence="8" type="ordered locus">TERMP_00533</name>
</gene>
<protein>
    <recommendedName>
        <fullName evidence="6">ATP-dependent helicase Lhr-Core protein 2</fullName>
        <shortName evidence="5">aLhr2</shortName>
        <ecNumber evidence="4">3.6.4.-</ecNumber>
        <ecNumber evidence="4">5.6.2.-</ecNumber>
    </recommendedName>
    <alternativeName>
        <fullName>Large helicase related protein</fullName>
    </alternativeName>
    <alternativeName>
        <fullName evidence="6">RNA:DNA 3'-5' helicase Lhr-Core</fullName>
    </alternativeName>
</protein>
<accession>F0LJX3</accession>
<sequence>MIRFAQREYTDEEIYEILADPVREWFRGKFGTFTPPQRYAVIEIHKGENVLISSPTGSGKTLSAFLAAINELILLGKEGKLEDKIYVLYVSPLRALNNDIRRNLEEPLREIREVAHEMGYDLPEIRVAVRTSDTSSYEKQKMVKKPPHILITTPESLAIALNAPKFSERLKTVKYVIVDEVHALAENKRGTHLMLSLERLQNLAGDFVRIGLSATIHPLEEVAKFVFGFNDDGTPRSGLIVDVSFAKKTEIKVESVVGDLVYTDAATLSEALYKRLDELIEQHRTTLIFTNTRSGAERVAYHLKKKFPKYAELIEAHHSSLSRDVRLEVEEKLKKGELRCVVSSTSLELGIDIGSIDLVVLIGSPKSVNRALQRIGRAGHRLHEVSKGIILVLDRDDLVECTVLAYNARNRRLDRIKIPQNPLDVLVQHLLGMALEKVWDINEAYKLVRRAYPYHNLSFEDFMSVLRYLAGEYAGLEEKKVYAKIWLDEKEGKFGRRGKMTRAIYYMNTGTIPDEAKIEVYTLDRRFIGTVEEEFAERLMPGDIFVLAGRTYEFKKSRGNRIYVEPKEGAKPTIPAWFSEMLPLSFDLALDVQRFRKEVKELLNNPKAEQILMEKYRIDEKAAKAILGYFREQAKYSTIPDDGILLVEEVLEERRAKYFFHTLIGRRANEALSRAFAYLVSKKKRCNVGIAISDNGFMLILPREKRLSEEDIRTLFQLEDLRETLKKALDNTELLKRRFRHVANRGLLILRRYMGRKKSLSRQQLNAQTLLRLLKKNYPDFPLLKEVYREIMEDKMDIKNAELFLSWVKEGKIKIVFEQNELPSPFAFNLEIIGASDVVLMEDRRELIKQLHRKIMAMIGELE</sequence>